<sequence length="230" mass="24670">MCGNNMSTPLPAIVPAARKATAAVIFLHGLGDTGHGWAEAFAGIRSSHIKYICPHAPVRPVTLNMNVAMPSWFDIIGLSPDSQEDESGIKQAAENIKALIDQEVKNGIPSNRIILGGFSQGGALSLYTALTTQQKLAGVTALSCWLPLRASFPQGPIGGANRDISILQCHGDCDPLVPLMFGSLTVEKLKTLVNPANVTFKTYEGMMHSSCQQEMMDVKQFIDKLLPPID</sequence>
<evidence type="ECO:0000250" key="1">
    <source>
        <dbReference type="UniProtKB" id="P70470"/>
    </source>
</evidence>
<evidence type="ECO:0000250" key="2">
    <source>
        <dbReference type="UniProtKB" id="P97823"/>
    </source>
</evidence>
<evidence type="ECO:0000269" key="3">
    <source>
    </source>
</evidence>
<evidence type="ECO:0000269" key="4">
    <source>
    </source>
</evidence>
<evidence type="ECO:0000269" key="5">
    <source>
    </source>
</evidence>
<evidence type="ECO:0000269" key="6">
    <source>
    </source>
</evidence>
<evidence type="ECO:0000269" key="7">
    <source>
    </source>
</evidence>
<evidence type="ECO:0000269" key="8">
    <source>
    </source>
</evidence>
<evidence type="ECO:0000269" key="9">
    <source>
    </source>
</evidence>
<evidence type="ECO:0000303" key="10">
    <source>
    </source>
</evidence>
<evidence type="ECO:0000305" key="11"/>
<evidence type="ECO:0000305" key="12">
    <source>
    </source>
</evidence>
<evidence type="ECO:0000305" key="13">
    <source>
    </source>
</evidence>
<evidence type="ECO:0000305" key="14">
    <source>
    </source>
</evidence>
<evidence type="ECO:0007829" key="15">
    <source>
        <dbReference type="PDB" id="1FJ2"/>
    </source>
</evidence>
<evidence type="ECO:0007829" key="16">
    <source>
        <dbReference type="PDB" id="5SYM"/>
    </source>
</evidence>
<comment type="function">
    <text evidence="1 4 5 6 7 8 9">Acts as an acyl-protein thioesterase (PubMed:19439193, PubMed:20418879). Hydrolyzes fatty acids from S-acylated cysteine residues in proteins such as trimeric G alpha proteins or HRAS (PubMed:20418879). Acts as a palmitoyl thioesterase that catalyzes depalmitoylation of proteins, such as ADRB2, KCNMA1 and SQSTM1 (PubMed:22399288, PubMed:27481942, PubMed:37802024). Acts as a negative regulator of autophagy by mediating palmitoylation of SQSTM1, decreasing affinity between SQSTM1 and ATG8 proteins and recruitment of ubiquitinated cargo proteins to autophagosomes (PubMed:37802024). Acts as a lysophospholipase and hydrolyzes lysophosphatidylcholine (lyso-PC) (PubMed:19439193). Also hydrolyzes lysophosphatidylethanolamine (lyso-PE), lysophosphatidylinositol (lyso-PI) and lysophosphatidylserine (lyso-PS) (By similarity). Has much higher thioesterase activity than lysophospholipase activity (PubMed:19439193). Contributes to the production of lysophosphatidic acid (LPA) during blood coagulation by recognizing and cleaving plasma phospholipids to generate lysophospholipids which in turn act as substrates for ENPP2 to produce LPA (PubMed:21393252).</text>
</comment>
<comment type="catalytic activity">
    <reaction evidence="7 9">
        <text>S-hexadecanoyl-L-cysteinyl-[protein] + H2O = L-cysteinyl-[protein] + hexadecanoate + H(+)</text>
        <dbReference type="Rhea" id="RHEA:19233"/>
        <dbReference type="Rhea" id="RHEA-COMP:10131"/>
        <dbReference type="Rhea" id="RHEA-COMP:11032"/>
        <dbReference type="ChEBI" id="CHEBI:7896"/>
        <dbReference type="ChEBI" id="CHEBI:15377"/>
        <dbReference type="ChEBI" id="CHEBI:15378"/>
        <dbReference type="ChEBI" id="CHEBI:29950"/>
        <dbReference type="ChEBI" id="CHEBI:74151"/>
        <dbReference type="EC" id="3.1.2.22"/>
    </reaction>
</comment>
<comment type="catalytic activity">
    <reaction evidence="4">
        <text>1-hexadecanoyl-sn-glycero-3-phosphocholine + H2O = sn-glycerol 3-phosphocholine + hexadecanoate + H(+)</text>
        <dbReference type="Rhea" id="RHEA:40435"/>
        <dbReference type="ChEBI" id="CHEBI:7896"/>
        <dbReference type="ChEBI" id="CHEBI:15377"/>
        <dbReference type="ChEBI" id="CHEBI:15378"/>
        <dbReference type="ChEBI" id="CHEBI:16870"/>
        <dbReference type="ChEBI" id="CHEBI:72998"/>
    </reaction>
    <physiologicalReaction direction="left-to-right" evidence="13">
        <dbReference type="Rhea" id="RHEA:40436"/>
    </physiologicalReaction>
</comment>
<comment type="catalytic activity">
    <reaction evidence="6">
        <text>a 1-(9Z-octadecenoyl)-2-acyl-sn-glycero-3-phosphocholine + H2O = a 2-acyl-sn-glycero-3-phosphocholine + (9Z)-octadecenoate + H(+)</text>
        <dbReference type="Rhea" id="RHEA:41720"/>
        <dbReference type="ChEBI" id="CHEBI:15377"/>
        <dbReference type="ChEBI" id="CHEBI:15378"/>
        <dbReference type="ChEBI" id="CHEBI:30823"/>
        <dbReference type="ChEBI" id="CHEBI:57875"/>
        <dbReference type="ChEBI" id="CHEBI:78421"/>
    </reaction>
    <physiologicalReaction direction="left-to-right" evidence="14">
        <dbReference type="Rhea" id="RHEA:41721"/>
    </physiologicalReaction>
</comment>
<comment type="activity regulation">
    <text evidence="5">Inhibited by palmostatin-B, leading to impair depalmitoylating of Ras.</text>
</comment>
<comment type="biophysicochemical properties">
    <kinetics>
        <KM evidence="4">27.3 uM for lysophosphatidylcholine for lysophospholipase activity</KM>
        <KM evidence="4">3.49 uM for thioesterase activity</KM>
        <Vmax evidence="4">1.62 umol/min/mg enzyme toward lysophosphatidylcholine for lysophospholipase activity</Vmax>
        <Vmax evidence="4">27.3 umol/min/mg enzyme for thioesterase activity</Vmax>
    </kinetics>
    <phDependence>
        <text evidence="4">Optimum pH is 7.4 for the thioesterase activity.</text>
    </phDependence>
</comment>
<comment type="subunit">
    <text evidence="3">Homodimer.</text>
</comment>
<comment type="interaction">
    <interactant intactId="EBI-1052185">
        <id>O75608</id>
    </interactant>
    <interactant intactId="EBI-618309">
        <id>Q08379</id>
        <label>GOLGA2</label>
    </interactant>
    <organismsDiffer>false</organismsDiffer>
    <experiments>3</experiments>
</comment>
<comment type="interaction">
    <interactant intactId="EBI-1052185">
        <id>O75608</id>
    </interactant>
    <interactant intactId="EBI-12025260">
        <id>Q5VUG0</id>
        <label>SFMBT2</label>
    </interactant>
    <organismsDiffer>false</organismsDiffer>
    <experiments>3</experiments>
</comment>
<comment type="subcellular location">
    <subcellularLocation>
        <location evidence="4">Cytoplasm</location>
    </subcellularLocation>
    <subcellularLocation>
        <location evidence="4">Cell membrane</location>
    </subcellularLocation>
    <subcellularLocation>
        <location evidence="4">Nucleus membrane</location>
    </subcellularLocation>
    <subcellularLocation>
        <location evidence="4">Endoplasmic reticulum</location>
    </subcellularLocation>
    <text evidence="4">Shows predominantly a cytoplasmic localization with a weak expression in the cell membrane, nuclear membrane and endoplasmic reticulum.</text>
</comment>
<comment type="alternative products">
    <event type="alternative splicing"/>
    <isoform>
        <id>O75608-1</id>
        <name>1</name>
        <sequence type="displayed"/>
    </isoform>
    <isoform>
        <id>O75608-2</id>
        <name>2</name>
        <sequence type="described" ref="VSP_009196"/>
    </isoform>
</comment>
<comment type="tissue specificity">
    <text evidence="6">Platelets.</text>
</comment>
<comment type="similarity">
    <text evidence="11">Belongs to the AB hydrolase superfamily. AB hydrolase 2 family.</text>
</comment>
<comment type="sequence caution" evidence="11">
    <conflict type="erroneous initiation">
        <sequence resource="EMBL-CDS" id="AAB88180"/>
    </conflict>
</comment>
<feature type="chain" id="PRO_0000102267" description="Acyl-protein thioesterase 1">
    <location>
        <begin position="1"/>
        <end position="230"/>
    </location>
</feature>
<feature type="active site" description="Charge relay system" evidence="4 9">
    <location>
        <position position="119"/>
    </location>
</feature>
<feature type="active site" description="Charge relay system" evidence="12">
    <location>
        <position position="174"/>
    </location>
</feature>
<feature type="active site" description="Charge relay system" evidence="12">
    <location>
        <position position="208"/>
    </location>
</feature>
<feature type="modified residue" description="N6-acetyllysine" evidence="2">
    <location>
        <position position="224"/>
    </location>
</feature>
<feature type="splice variant" id="VSP_009196" description="In isoform 2." evidence="10">
    <location>
        <begin position="57"/>
        <end position="72"/>
    </location>
</feature>
<feature type="sequence variant" id="VAR_060991" description="In dbSNP:rs11549448.">
    <original>P</original>
    <variation>S</variation>
    <location>
        <position position="153"/>
    </location>
</feature>
<feature type="mutagenesis site" description="Loss of thioesterase and lysophospholipase activity." evidence="4 9">
    <original>S</original>
    <variation>A</variation>
    <location>
        <position position="119"/>
    </location>
</feature>
<feature type="sequence conflict" description="In Ref. 5; AAB88180." evidence="11" ref="5">
    <original>YTALT</original>
    <variation>SLIRG</variation>
    <location>
        <begin position="127"/>
        <end position="131"/>
    </location>
</feature>
<feature type="strand" evidence="15">
    <location>
        <begin position="12"/>
        <end position="14"/>
    </location>
</feature>
<feature type="strand" evidence="16">
    <location>
        <begin position="17"/>
        <end position="19"/>
    </location>
</feature>
<feature type="strand" evidence="15">
    <location>
        <begin position="21"/>
        <end position="27"/>
    </location>
</feature>
<feature type="strand" evidence="15">
    <location>
        <begin position="30"/>
        <end position="32"/>
    </location>
</feature>
<feature type="helix" evidence="15">
    <location>
        <begin position="34"/>
        <end position="42"/>
    </location>
</feature>
<feature type="strand" evidence="15">
    <location>
        <begin position="49"/>
        <end position="53"/>
    </location>
</feature>
<feature type="strand" evidence="15">
    <location>
        <begin position="58"/>
        <end position="60"/>
    </location>
</feature>
<feature type="helix" evidence="15">
    <location>
        <begin position="62"/>
        <end position="64"/>
    </location>
</feature>
<feature type="strand" evidence="15">
    <location>
        <begin position="68"/>
        <end position="70"/>
    </location>
</feature>
<feature type="helix" evidence="15">
    <location>
        <begin position="86"/>
        <end position="105"/>
    </location>
</feature>
<feature type="helix" evidence="15">
    <location>
        <begin position="110"/>
        <end position="112"/>
    </location>
</feature>
<feature type="strand" evidence="15">
    <location>
        <begin position="113"/>
        <end position="118"/>
    </location>
</feature>
<feature type="helix" evidence="15">
    <location>
        <begin position="120"/>
        <end position="129"/>
    </location>
</feature>
<feature type="strand" evidence="15">
    <location>
        <begin position="137"/>
        <end position="143"/>
    </location>
</feature>
<feature type="helix" evidence="15">
    <location>
        <begin position="149"/>
        <end position="151"/>
    </location>
</feature>
<feature type="turn" evidence="15">
    <location>
        <begin position="160"/>
        <end position="163"/>
    </location>
</feature>
<feature type="strand" evidence="15">
    <location>
        <begin position="166"/>
        <end position="171"/>
    </location>
</feature>
<feature type="strand" evidence="15">
    <location>
        <begin position="175"/>
        <end position="177"/>
    </location>
</feature>
<feature type="helix" evidence="15">
    <location>
        <begin position="179"/>
        <end position="192"/>
    </location>
</feature>
<feature type="helix" evidence="15">
    <location>
        <begin position="195"/>
        <end position="197"/>
    </location>
</feature>
<feature type="strand" evidence="15">
    <location>
        <begin position="198"/>
        <end position="203"/>
    </location>
</feature>
<feature type="helix" evidence="15">
    <location>
        <begin position="212"/>
        <end position="225"/>
    </location>
</feature>
<organism>
    <name type="scientific">Homo sapiens</name>
    <name type="common">Human</name>
    <dbReference type="NCBI Taxonomy" id="9606"/>
    <lineage>
        <taxon>Eukaryota</taxon>
        <taxon>Metazoa</taxon>
        <taxon>Chordata</taxon>
        <taxon>Craniata</taxon>
        <taxon>Vertebrata</taxon>
        <taxon>Euteleostomi</taxon>
        <taxon>Mammalia</taxon>
        <taxon>Eutheria</taxon>
        <taxon>Euarchontoglires</taxon>
        <taxon>Primates</taxon>
        <taxon>Haplorrhini</taxon>
        <taxon>Catarrhini</taxon>
        <taxon>Hominidae</taxon>
        <taxon>Homo</taxon>
    </lineage>
</organism>
<gene>
    <name type="primary">LYPLA1</name>
    <name type="synonym">APT1</name>
    <name type="synonym">LPL1</name>
</gene>
<proteinExistence type="evidence at protein level"/>
<reference key="1">
    <citation type="submission" date="1998-08" db="EMBL/GenBank/DDBJ databases">
        <authorList>
            <person name="Hu G."/>
        </authorList>
    </citation>
    <scope>NUCLEOTIDE SEQUENCE [MRNA] (ISOFORM 1)</scope>
</reference>
<reference key="2">
    <citation type="journal article" date="2000" name="Structure">
        <title>Crystal structure of the human acyl protein thioesterase I from a single X-ray data set to 1.5 A.</title>
        <authorList>
            <person name="Devedjiev Y."/>
            <person name="Dauter Z."/>
            <person name="Kuznetsov S.R."/>
            <person name="Jones T.L.Z."/>
            <person name="Derewenda Z.S."/>
        </authorList>
    </citation>
    <scope>NUCLEOTIDE SEQUENCE [MRNA] (ISOFORM 1)</scope>
    <scope>X-RAY CRYSTALLOGRAPHY (1.5 ANGSTROMS) OF 6-230</scope>
    <scope>SUBUNIT</scope>
    <scope>ACTIVE SITE</scope>
    <source>
        <tissue>Testis</tissue>
    </source>
</reference>
<reference key="3">
    <citation type="journal article" date="2000" name="Genome Res.">
        <title>Cloning and functional analysis of cDNAs with open reading frames for 300 previously undefined genes expressed in CD34+ hematopoietic stem/progenitor cells.</title>
        <authorList>
            <person name="Zhang Q.-H."/>
            <person name="Ye M."/>
            <person name="Wu X.-Y."/>
            <person name="Ren S.-X."/>
            <person name="Zhao M."/>
            <person name="Zhao C.-J."/>
            <person name="Fu G."/>
            <person name="Shen Y."/>
            <person name="Fan H.-Y."/>
            <person name="Lu G."/>
            <person name="Zhong M."/>
            <person name="Xu X.-R."/>
            <person name="Han Z.-G."/>
            <person name="Zhang J.-W."/>
            <person name="Tao J."/>
            <person name="Huang Q.-H."/>
            <person name="Zhou J."/>
            <person name="Hu G.-X."/>
            <person name="Gu J."/>
            <person name="Chen S.-J."/>
            <person name="Chen Z."/>
        </authorList>
    </citation>
    <scope>NUCLEOTIDE SEQUENCE [LARGE SCALE MRNA] (ISOFORMS 1 AND 2)</scope>
    <source>
        <tissue>Umbilical cord blood</tissue>
    </source>
</reference>
<reference key="4">
    <citation type="journal article" date="2004" name="Genome Res.">
        <title>The status, quality, and expansion of the NIH full-length cDNA project: the Mammalian Gene Collection (MGC).</title>
        <authorList>
            <consortium name="The MGC Project Team"/>
        </authorList>
    </citation>
    <scope>NUCLEOTIDE SEQUENCE [LARGE SCALE MRNA] (ISOFORM 1)</scope>
    <source>
        <tissue>Bone marrow</tissue>
        <tissue>Eye</tissue>
    </source>
</reference>
<reference key="5">
    <citation type="submission" date="1997-11" db="EMBL/GenBank/DDBJ databases">
        <authorList>
            <person name="Yu W."/>
            <person name="Sarginson J."/>
            <person name="Gibbs R.A."/>
        </authorList>
    </citation>
    <scope>NUCLEOTIDE SEQUENCE [LARGE SCALE MRNA] OF 127-230 (ISOFORM 1)</scope>
    <source>
        <tissue>Brain</tissue>
    </source>
</reference>
<reference key="6">
    <citation type="journal article" date="2009" name="Biochim. Biophys. Acta">
        <title>Thioesterase activity and subcellular localization of acylprotein thioesterase 1/lysophospholipase 1.</title>
        <authorList>
            <person name="Hirano T."/>
            <person name="Kishi M."/>
            <person name="Sugimoto H."/>
            <person name="Taguchi R."/>
            <person name="Obinata H."/>
            <person name="Ohshima N."/>
            <person name="Tatei K."/>
            <person name="Izumi T."/>
        </authorList>
    </citation>
    <scope>FUNCTION</scope>
    <scope>CATALYTIC ACTIVITY</scope>
    <scope>SUBCELLULAR LOCATION</scope>
    <scope>MUTAGENESIS OF SER-119</scope>
</reference>
<reference key="7">
    <citation type="journal article" date="2010" name="Nat. Chem. Biol.">
        <title>Small-molecule inhibition of APT1 affects Ras localization and signaling.</title>
        <authorList>
            <person name="Dekker F.J."/>
            <person name="Rocks O."/>
            <person name="Vartak N."/>
            <person name="Menninger S."/>
            <person name="Hedberg C."/>
            <person name="Balamurugan R."/>
            <person name="Wetzel S."/>
            <person name="Renner S."/>
            <person name="Gerauer M."/>
            <person name="Scholermann B."/>
            <person name="Rusch M."/>
            <person name="Kramer J.W."/>
            <person name="Rauh D."/>
            <person name="Coates G.W."/>
            <person name="Brunsveld L."/>
            <person name="Bastiaens P.I."/>
            <person name="Waldmann H."/>
        </authorList>
    </citation>
    <scope>ACTIVITY REGULATION</scope>
    <scope>FUNCTION</scope>
</reference>
<reference key="8">
    <citation type="journal article" date="2011" name="BMC Syst. Biol.">
        <title>Initial characterization of the human central proteome.</title>
        <authorList>
            <person name="Burkard T.R."/>
            <person name="Planyavsky M."/>
            <person name="Kaupe I."/>
            <person name="Breitwieser F.P."/>
            <person name="Buerckstuemmer T."/>
            <person name="Bennett K.L."/>
            <person name="Superti-Furga G."/>
            <person name="Colinge J."/>
        </authorList>
    </citation>
    <scope>IDENTIFICATION BY MASS SPECTROMETRY [LARGE SCALE ANALYSIS]</scope>
</reference>
<reference key="9">
    <citation type="journal article" date="2011" name="J. Lipid Res.">
        <title>The phospholipase A1 activity of lysophospholipase A-I links platelet activation to LPA production during blood coagulation.</title>
        <authorList>
            <person name="Bolen A.L."/>
            <person name="Naren A.P."/>
            <person name="Yarlagadda S."/>
            <person name="Beranova-Giorgianni S."/>
            <person name="Chen L."/>
            <person name="Norman D."/>
            <person name="Baker D.L."/>
            <person name="Rowland M.M."/>
            <person name="Best M.D."/>
            <person name="Sano T."/>
            <person name="Tsukahara T."/>
            <person name="Liliom K."/>
            <person name="Igarashi Y."/>
            <person name="Tigyi G."/>
        </authorList>
    </citation>
    <scope>FUNCTION</scope>
    <scope>CATALYTIC ACTIVITY</scope>
    <scope>TISSUE SPECIFICITY</scope>
</reference>
<reference key="10">
    <citation type="journal article" date="2012" name="J. Biol. Chem.">
        <title>Distinct acyl protein transferases and thioesterases control surface expression of calcium-activated potassium channels.</title>
        <authorList>
            <person name="Tian L."/>
            <person name="McClafferty H."/>
            <person name="Knaus H.G."/>
            <person name="Ruth P."/>
            <person name="Shipston M.J."/>
        </authorList>
    </citation>
    <scope>FUNCTION</scope>
    <scope>CATALYTIC ACTIVITY</scope>
</reference>
<reference key="11">
    <citation type="journal article" date="2015" name="Proteomics">
        <title>N-terminome analysis of the human mitochondrial proteome.</title>
        <authorList>
            <person name="Vaca Jacome A.S."/>
            <person name="Rabilloud T."/>
            <person name="Schaeffer-Reiss C."/>
            <person name="Rompais M."/>
            <person name="Ayoub D."/>
            <person name="Lane L."/>
            <person name="Bairoch A."/>
            <person name="Van Dorsselaer A."/>
            <person name="Carapito C."/>
        </authorList>
    </citation>
    <scope>IDENTIFICATION BY MASS SPECTROMETRY [LARGE SCALE ANALYSIS]</scope>
</reference>
<reference key="12">
    <citation type="journal article" date="2016" name="J. Biol. Chem.">
        <title>S-Palmitoylation of a Novel Site in the beta2-Adrenergic Receptor Associated with a Novel Intracellular Itinerary.</title>
        <authorList>
            <person name="Adachi N."/>
            <person name="Hess D.T."/>
            <person name="McLaughlin P."/>
            <person name="Stamler J.S."/>
        </authorList>
    </citation>
    <scope>FUNCTION</scope>
</reference>
<reference key="13">
    <citation type="journal article" date="2023" name="Mol. Cell">
        <title>S-acylation of p62 promotes p62 droplet recruitment into autophagosomes in mammalian autophagy.</title>
        <authorList>
            <person name="Huang X."/>
            <person name="Yao J."/>
            <person name="Liu L."/>
            <person name="Chen J."/>
            <person name="Mei L."/>
            <person name="Huangfu J."/>
            <person name="Luo D."/>
            <person name="Wang X."/>
            <person name="Lin C."/>
            <person name="Chen X."/>
            <person name="Yang Y."/>
            <person name="Ouyang S."/>
            <person name="Wei F."/>
            <person name="Wang Z."/>
            <person name="Zhang S."/>
            <person name="Xiang T."/>
            <person name="Neculai D."/>
            <person name="Sun Q."/>
            <person name="Kong E."/>
            <person name="Tate E.W."/>
            <person name="Yang A."/>
        </authorList>
    </citation>
    <scope>FUNCTION</scope>
    <scope>CATALYTIC ACTIVITY</scope>
    <scope>ACTIVE SITE</scope>
    <scope>MUTAGENESIS OF SER-119</scope>
</reference>
<accession>O75608</accession>
<accession>O43202</accession>
<accession>Q9UQF9</accession>
<name>LYPA1_HUMAN</name>
<protein>
    <recommendedName>
        <fullName>Acyl-protein thioesterase 1</fullName>
        <shortName>APT-1</shortName>
        <shortName>hAPT1</shortName>
        <ecNumber>3.1.2.-</ecNumber>
    </recommendedName>
    <alternativeName>
        <fullName>Lysophospholipase 1</fullName>
    </alternativeName>
    <alternativeName>
        <fullName>Lysophospholipase I</fullName>
        <shortName>LPL-I</shortName>
        <shortName>LysoPLA I</shortName>
    </alternativeName>
    <alternativeName>
        <fullName evidence="11">Palmitoyl-protein hydrolase</fullName>
        <ecNumber evidence="7 9">3.1.2.22</ecNumber>
    </alternativeName>
</protein>
<dbReference type="EC" id="3.1.2.-"/>
<dbReference type="EC" id="3.1.2.22" evidence="7 9"/>
<dbReference type="EMBL" id="AF081281">
    <property type="protein sequence ID" value="AAC31610.1"/>
    <property type="molecule type" value="mRNA"/>
</dbReference>
<dbReference type="EMBL" id="AF291053">
    <property type="protein sequence ID" value="AAG10063.1"/>
    <property type="molecule type" value="mRNA"/>
</dbReference>
<dbReference type="EMBL" id="AF077198">
    <property type="protein sequence ID" value="AAD26993.1"/>
    <property type="molecule type" value="mRNA"/>
</dbReference>
<dbReference type="EMBL" id="AF077199">
    <property type="protein sequence ID" value="AAD26994.1"/>
    <property type="molecule type" value="mRNA"/>
</dbReference>
<dbReference type="EMBL" id="BC008652">
    <property type="protein sequence ID" value="AAH08652.1"/>
    <property type="molecule type" value="mRNA"/>
</dbReference>
<dbReference type="EMBL" id="BC010397">
    <property type="protein sequence ID" value="AAH10397.1"/>
    <property type="molecule type" value="mRNA"/>
</dbReference>
<dbReference type="EMBL" id="AF035293">
    <property type="protein sequence ID" value="AAB88180.1"/>
    <property type="status" value="ALT_INIT"/>
    <property type="molecule type" value="mRNA"/>
</dbReference>
<dbReference type="CCDS" id="CCDS6157.1">
    <molecule id="O75608-1"/>
</dbReference>
<dbReference type="CCDS" id="CCDS64899.1">
    <molecule id="O75608-2"/>
</dbReference>
<dbReference type="RefSeq" id="NP_001266285.1">
    <property type="nucleotide sequence ID" value="NM_001279356.1"/>
</dbReference>
<dbReference type="RefSeq" id="NP_001266286.1">
    <molecule id="O75608-2"/>
    <property type="nucleotide sequence ID" value="NM_001279357.2"/>
</dbReference>
<dbReference type="RefSeq" id="NP_001266287.1">
    <property type="nucleotide sequence ID" value="NM_001279358.1"/>
</dbReference>
<dbReference type="RefSeq" id="NP_001266288.1">
    <property type="nucleotide sequence ID" value="NM_001279359.1"/>
</dbReference>
<dbReference type="RefSeq" id="NP_001266289.1">
    <property type="nucleotide sequence ID" value="NM_001279360.1"/>
</dbReference>
<dbReference type="RefSeq" id="NP_006321.1">
    <molecule id="O75608-1"/>
    <property type="nucleotide sequence ID" value="NM_006330.4"/>
</dbReference>
<dbReference type="PDB" id="1FJ2">
    <property type="method" value="X-ray"/>
    <property type="resolution" value="1.50 A"/>
    <property type="chains" value="A/B=6-230"/>
</dbReference>
<dbReference type="PDB" id="5SYM">
    <property type="method" value="X-ray"/>
    <property type="resolution" value="1.55 A"/>
    <property type="chains" value="A/B=1-230"/>
</dbReference>
<dbReference type="PDB" id="6QGN">
    <property type="method" value="X-ray"/>
    <property type="resolution" value="2.10 A"/>
    <property type="chains" value="A/B/C/D=1-230"/>
</dbReference>
<dbReference type="PDB" id="6QGO">
    <property type="method" value="X-ray"/>
    <property type="resolution" value="2.60 A"/>
    <property type="chains" value="B/C=1-230"/>
</dbReference>
<dbReference type="PDB" id="6QGQ">
    <property type="method" value="X-ray"/>
    <property type="resolution" value="2.60 A"/>
    <property type="chains" value="A/B/C/D=1-230"/>
</dbReference>
<dbReference type="PDB" id="6QGS">
    <property type="method" value="X-ray"/>
    <property type="resolution" value="2.75 A"/>
    <property type="chains" value="A/B/C/D/E/F=1-230"/>
</dbReference>
<dbReference type="PDBsum" id="1FJ2"/>
<dbReference type="PDBsum" id="5SYM"/>
<dbReference type="PDBsum" id="6QGN"/>
<dbReference type="PDBsum" id="6QGO"/>
<dbReference type="PDBsum" id="6QGQ"/>
<dbReference type="PDBsum" id="6QGS"/>
<dbReference type="SMR" id="O75608"/>
<dbReference type="BioGRID" id="115701">
    <property type="interactions" value="90"/>
</dbReference>
<dbReference type="FunCoup" id="O75608">
    <property type="interactions" value="2585"/>
</dbReference>
<dbReference type="IntAct" id="O75608">
    <property type="interactions" value="28"/>
</dbReference>
<dbReference type="STRING" id="9606.ENSP00000320043"/>
<dbReference type="BindingDB" id="O75608"/>
<dbReference type="ChEMBL" id="CHEMBL1681631"/>
<dbReference type="GuidetoPHARMACOLOGY" id="3290"/>
<dbReference type="SwissLipids" id="SLP:000000734"/>
<dbReference type="ESTHER" id="human-LYPLA1">
    <property type="family name" value="LYsophospholipase_carboxylesterase"/>
</dbReference>
<dbReference type="MEROPS" id="S09.941"/>
<dbReference type="GlyGen" id="O75608">
    <property type="glycosylation" value="1 site, 1 O-linked glycan (1 site)"/>
</dbReference>
<dbReference type="iPTMnet" id="O75608"/>
<dbReference type="PhosphoSitePlus" id="O75608"/>
<dbReference type="SwissPalm" id="O75608"/>
<dbReference type="BioMuta" id="LYPLA1"/>
<dbReference type="OGP" id="O75608"/>
<dbReference type="CPTAC" id="CPTAC-536"/>
<dbReference type="CPTAC" id="CPTAC-537"/>
<dbReference type="jPOST" id="O75608"/>
<dbReference type="MassIVE" id="O75608"/>
<dbReference type="PaxDb" id="9606-ENSP00000320043"/>
<dbReference type="PeptideAtlas" id="O75608"/>
<dbReference type="ProteomicsDB" id="50117">
    <molecule id="O75608-1"/>
</dbReference>
<dbReference type="ProteomicsDB" id="50118">
    <molecule id="O75608-2"/>
</dbReference>
<dbReference type="Pumba" id="O75608"/>
<dbReference type="Antibodypedia" id="24492">
    <property type="antibodies" value="310 antibodies from 33 providers"/>
</dbReference>
<dbReference type="DNASU" id="10434"/>
<dbReference type="Ensembl" id="ENST00000316963.8">
    <molecule id="O75608-1"/>
    <property type="protein sequence ID" value="ENSP00000320043.3"/>
    <property type="gene ID" value="ENSG00000120992.18"/>
</dbReference>
<dbReference type="Ensembl" id="ENST00000343231.10">
    <molecule id="O75608-2"/>
    <property type="protein sequence ID" value="ENSP00000344477.6"/>
    <property type="gene ID" value="ENSG00000120992.18"/>
</dbReference>
<dbReference type="GeneID" id="10434"/>
<dbReference type="KEGG" id="hsa:10434"/>
<dbReference type="MANE-Select" id="ENST00000316963.8">
    <property type="protein sequence ID" value="ENSP00000320043.3"/>
    <property type="RefSeq nucleotide sequence ID" value="NM_006330.4"/>
    <property type="RefSeq protein sequence ID" value="NP_006321.1"/>
</dbReference>
<dbReference type="UCSC" id="uc003xrz.5">
    <molecule id="O75608-1"/>
    <property type="organism name" value="human"/>
</dbReference>
<dbReference type="AGR" id="HGNC:6737"/>
<dbReference type="CTD" id="10434"/>
<dbReference type="DisGeNET" id="10434"/>
<dbReference type="GeneCards" id="LYPLA1"/>
<dbReference type="HGNC" id="HGNC:6737">
    <property type="gene designation" value="LYPLA1"/>
</dbReference>
<dbReference type="HPA" id="ENSG00000120992">
    <property type="expression patterns" value="Low tissue specificity"/>
</dbReference>
<dbReference type="MIM" id="605599">
    <property type="type" value="gene"/>
</dbReference>
<dbReference type="neXtProt" id="NX_O75608"/>
<dbReference type="OpenTargets" id="ENSG00000120992"/>
<dbReference type="PharmGKB" id="PA30499"/>
<dbReference type="VEuPathDB" id="HostDB:ENSG00000120992"/>
<dbReference type="eggNOG" id="KOG2112">
    <property type="taxonomic scope" value="Eukaryota"/>
</dbReference>
<dbReference type="GeneTree" id="ENSGT00940000154185"/>
<dbReference type="InParanoid" id="O75608"/>
<dbReference type="OMA" id="LMFRTYN"/>
<dbReference type="OrthoDB" id="2418081at2759"/>
<dbReference type="PAN-GO" id="O75608">
    <property type="GO annotations" value="4 GO annotations based on evolutionary models"/>
</dbReference>
<dbReference type="PhylomeDB" id="O75608"/>
<dbReference type="TreeFam" id="TF314619"/>
<dbReference type="BRENDA" id="3.1.2.22">
    <property type="organism ID" value="2681"/>
</dbReference>
<dbReference type="PathwayCommons" id="O75608"/>
<dbReference type="Reactome" id="R-HSA-203615">
    <property type="pathway name" value="eNOS activation"/>
</dbReference>
<dbReference type="Reactome" id="R-HSA-9648002">
    <property type="pathway name" value="RAS processing"/>
</dbReference>
<dbReference type="SignaLink" id="O75608"/>
<dbReference type="BioGRID-ORCS" id="10434">
    <property type="hits" value="30 hits in 1154 CRISPR screens"/>
</dbReference>
<dbReference type="ChiTaRS" id="LYPLA1">
    <property type="organism name" value="human"/>
</dbReference>
<dbReference type="EvolutionaryTrace" id="O75608"/>
<dbReference type="GeneWiki" id="LYPLA1"/>
<dbReference type="GenomeRNAi" id="10434"/>
<dbReference type="Pharos" id="O75608">
    <property type="development level" value="Tchem"/>
</dbReference>
<dbReference type="PRO" id="PR:O75608"/>
<dbReference type="Proteomes" id="UP000005640">
    <property type="component" value="Chromosome 8"/>
</dbReference>
<dbReference type="RNAct" id="O75608">
    <property type="molecule type" value="protein"/>
</dbReference>
<dbReference type="Bgee" id="ENSG00000120992">
    <property type="expression patterns" value="Expressed in penis and 213 other cell types or tissues"/>
</dbReference>
<dbReference type="ExpressionAtlas" id="O75608">
    <property type="expression patterns" value="baseline and differential"/>
</dbReference>
<dbReference type="GO" id="GO:0005737">
    <property type="term" value="C:cytoplasm"/>
    <property type="evidence" value="ECO:0000314"/>
    <property type="project" value="UniProtKB"/>
</dbReference>
<dbReference type="GO" id="GO:0005829">
    <property type="term" value="C:cytosol"/>
    <property type="evidence" value="ECO:0000314"/>
    <property type="project" value="HPA"/>
</dbReference>
<dbReference type="GO" id="GO:0005783">
    <property type="term" value="C:endoplasmic reticulum"/>
    <property type="evidence" value="ECO:0000314"/>
    <property type="project" value="UniProtKB"/>
</dbReference>
<dbReference type="GO" id="GO:0070062">
    <property type="term" value="C:extracellular exosome"/>
    <property type="evidence" value="ECO:0007005"/>
    <property type="project" value="UniProtKB"/>
</dbReference>
<dbReference type="GO" id="GO:0005739">
    <property type="term" value="C:mitochondrion"/>
    <property type="evidence" value="ECO:0000314"/>
    <property type="project" value="FlyBase"/>
</dbReference>
<dbReference type="GO" id="GO:0031965">
    <property type="term" value="C:nuclear membrane"/>
    <property type="evidence" value="ECO:0000314"/>
    <property type="project" value="UniProtKB"/>
</dbReference>
<dbReference type="GO" id="GO:0005654">
    <property type="term" value="C:nucleoplasm"/>
    <property type="evidence" value="ECO:0000314"/>
    <property type="project" value="HPA"/>
</dbReference>
<dbReference type="GO" id="GO:0005886">
    <property type="term" value="C:plasma membrane"/>
    <property type="evidence" value="ECO:0000314"/>
    <property type="project" value="UniProtKB"/>
</dbReference>
<dbReference type="GO" id="GO:0052689">
    <property type="term" value="F:carboxylic ester hydrolase activity"/>
    <property type="evidence" value="ECO:0000318"/>
    <property type="project" value="GO_Central"/>
</dbReference>
<dbReference type="GO" id="GO:0016298">
    <property type="term" value="F:lipase activity"/>
    <property type="evidence" value="ECO:0000314"/>
    <property type="project" value="CACAO"/>
</dbReference>
<dbReference type="GO" id="GO:0004622">
    <property type="term" value="F:lysophospholipase activity"/>
    <property type="evidence" value="ECO:0000314"/>
    <property type="project" value="UniProtKB"/>
</dbReference>
<dbReference type="GO" id="GO:0008474">
    <property type="term" value="F:palmitoyl-(protein) hydrolase activity"/>
    <property type="evidence" value="ECO:0000314"/>
    <property type="project" value="UniProtKB"/>
</dbReference>
<dbReference type="GO" id="GO:0004620">
    <property type="term" value="F:phospholipase activity"/>
    <property type="evidence" value="ECO:0000314"/>
    <property type="project" value="UniProtKB"/>
</dbReference>
<dbReference type="GO" id="GO:0006631">
    <property type="term" value="P:fatty acid metabolic process"/>
    <property type="evidence" value="ECO:0007669"/>
    <property type="project" value="UniProtKB-KW"/>
</dbReference>
<dbReference type="GO" id="GO:0015908">
    <property type="term" value="P:fatty acid transport"/>
    <property type="evidence" value="ECO:0000314"/>
    <property type="project" value="UniProt"/>
</dbReference>
<dbReference type="GO" id="GO:1905336">
    <property type="term" value="P:negative regulation of aggrephagy"/>
    <property type="evidence" value="ECO:0000314"/>
    <property type="project" value="UniProt"/>
</dbReference>
<dbReference type="GO" id="GO:0042997">
    <property type="term" value="P:negative regulation of Golgi to plasma membrane protein transport"/>
    <property type="evidence" value="ECO:0000318"/>
    <property type="project" value="GO_Central"/>
</dbReference>
<dbReference type="GO" id="GO:0002084">
    <property type="term" value="P:protein depalmitoylation"/>
    <property type="evidence" value="ECO:0000314"/>
    <property type="project" value="UniProtKB"/>
</dbReference>
<dbReference type="FunFam" id="3.40.50.1820:FF:000010">
    <property type="entry name" value="Acyl-protein thioesterase 2"/>
    <property type="match status" value="1"/>
</dbReference>
<dbReference type="Gene3D" id="3.40.50.1820">
    <property type="entry name" value="alpha/beta hydrolase"/>
    <property type="match status" value="1"/>
</dbReference>
<dbReference type="InterPro" id="IPR029058">
    <property type="entry name" value="AB_hydrolase_fold"/>
</dbReference>
<dbReference type="InterPro" id="IPR050565">
    <property type="entry name" value="LYPA1-2/EST-like"/>
</dbReference>
<dbReference type="InterPro" id="IPR003140">
    <property type="entry name" value="PLipase/COase/thioEstase"/>
</dbReference>
<dbReference type="PANTHER" id="PTHR10655:SF22">
    <property type="entry name" value="ACYL-PROTEIN THIOESTERASE 1"/>
    <property type="match status" value="1"/>
</dbReference>
<dbReference type="PANTHER" id="PTHR10655">
    <property type="entry name" value="LYSOPHOSPHOLIPASE-RELATED"/>
    <property type="match status" value="1"/>
</dbReference>
<dbReference type="Pfam" id="PF02230">
    <property type="entry name" value="Abhydrolase_2"/>
    <property type="match status" value="1"/>
</dbReference>
<dbReference type="SUPFAM" id="SSF53474">
    <property type="entry name" value="alpha/beta-Hydrolases"/>
    <property type="match status" value="1"/>
</dbReference>
<keyword id="KW-0002">3D-structure</keyword>
<keyword id="KW-0007">Acetylation</keyword>
<keyword id="KW-0025">Alternative splicing</keyword>
<keyword id="KW-1003">Cell membrane</keyword>
<keyword id="KW-0963">Cytoplasm</keyword>
<keyword id="KW-0256">Endoplasmic reticulum</keyword>
<keyword id="KW-0276">Fatty acid metabolism</keyword>
<keyword id="KW-0378">Hydrolase</keyword>
<keyword id="KW-0443">Lipid metabolism</keyword>
<keyword id="KW-0472">Membrane</keyword>
<keyword id="KW-0539">Nucleus</keyword>
<keyword id="KW-1267">Proteomics identification</keyword>
<keyword id="KW-1185">Reference proteome</keyword>